<protein>
    <recommendedName>
        <fullName evidence="1">Mannonate dehydratase</fullName>
        <ecNumber evidence="1">4.2.1.8</ecNumber>
    </recommendedName>
    <alternativeName>
        <fullName evidence="1">D-mannonate hydro-lyase</fullName>
    </alternativeName>
</protein>
<gene>
    <name evidence="1" type="primary">uxuA</name>
    <name type="ordered locus">SEN2978</name>
</gene>
<dbReference type="EC" id="4.2.1.8" evidence="1"/>
<dbReference type="EMBL" id="AM933172">
    <property type="protein sequence ID" value="CAR34554.1"/>
    <property type="molecule type" value="Genomic_DNA"/>
</dbReference>
<dbReference type="RefSeq" id="WP_000815479.1">
    <property type="nucleotide sequence ID" value="NC_011294.1"/>
</dbReference>
<dbReference type="SMR" id="B5QYB0"/>
<dbReference type="KEGG" id="set:SEN2978"/>
<dbReference type="HOGENOM" id="CLU_058621_2_0_6"/>
<dbReference type="UniPathway" id="UPA00246"/>
<dbReference type="Proteomes" id="UP000000613">
    <property type="component" value="Chromosome"/>
</dbReference>
<dbReference type="GO" id="GO:0008198">
    <property type="term" value="F:ferrous iron binding"/>
    <property type="evidence" value="ECO:0007669"/>
    <property type="project" value="TreeGrafter"/>
</dbReference>
<dbReference type="GO" id="GO:0030145">
    <property type="term" value="F:manganese ion binding"/>
    <property type="evidence" value="ECO:0007669"/>
    <property type="project" value="TreeGrafter"/>
</dbReference>
<dbReference type="GO" id="GO:0008927">
    <property type="term" value="F:mannonate dehydratase activity"/>
    <property type="evidence" value="ECO:0007669"/>
    <property type="project" value="UniProtKB-UniRule"/>
</dbReference>
<dbReference type="GO" id="GO:0042840">
    <property type="term" value="P:D-glucuronate catabolic process"/>
    <property type="evidence" value="ECO:0007669"/>
    <property type="project" value="TreeGrafter"/>
</dbReference>
<dbReference type="FunFam" id="3.20.20.150:FF:000004">
    <property type="entry name" value="Mannonate dehydratase"/>
    <property type="match status" value="1"/>
</dbReference>
<dbReference type="FunFam" id="3.20.20.150:FF:000005">
    <property type="entry name" value="Mannonate dehydratase"/>
    <property type="match status" value="1"/>
</dbReference>
<dbReference type="Gene3D" id="3.20.20.150">
    <property type="entry name" value="Divalent-metal-dependent TIM barrel enzymes"/>
    <property type="match status" value="2"/>
</dbReference>
<dbReference type="HAMAP" id="MF_00106">
    <property type="entry name" value="UxuA"/>
    <property type="match status" value="1"/>
</dbReference>
<dbReference type="InterPro" id="IPR004628">
    <property type="entry name" value="Man_deHydtase"/>
</dbReference>
<dbReference type="InterPro" id="IPR036237">
    <property type="entry name" value="Xyl_isomerase-like_sf"/>
</dbReference>
<dbReference type="NCBIfam" id="NF003027">
    <property type="entry name" value="PRK03906.1"/>
    <property type="match status" value="1"/>
</dbReference>
<dbReference type="NCBIfam" id="TIGR00695">
    <property type="entry name" value="uxuA"/>
    <property type="match status" value="1"/>
</dbReference>
<dbReference type="PANTHER" id="PTHR30387">
    <property type="entry name" value="MANNONATE DEHYDRATASE"/>
    <property type="match status" value="1"/>
</dbReference>
<dbReference type="PANTHER" id="PTHR30387:SF2">
    <property type="entry name" value="MANNONATE DEHYDRATASE"/>
    <property type="match status" value="1"/>
</dbReference>
<dbReference type="Pfam" id="PF03786">
    <property type="entry name" value="UxuA"/>
    <property type="match status" value="1"/>
</dbReference>
<dbReference type="PIRSF" id="PIRSF016049">
    <property type="entry name" value="Man_dehyd"/>
    <property type="match status" value="1"/>
</dbReference>
<dbReference type="SUPFAM" id="SSF51658">
    <property type="entry name" value="Xylose isomerase-like"/>
    <property type="match status" value="1"/>
</dbReference>
<reference key="1">
    <citation type="journal article" date="2008" name="Genome Res.">
        <title>Comparative genome analysis of Salmonella enteritidis PT4 and Salmonella gallinarum 287/91 provides insights into evolutionary and host adaptation pathways.</title>
        <authorList>
            <person name="Thomson N.R."/>
            <person name="Clayton D.J."/>
            <person name="Windhorst D."/>
            <person name="Vernikos G."/>
            <person name="Davidson S."/>
            <person name="Churcher C."/>
            <person name="Quail M.A."/>
            <person name="Stevens M."/>
            <person name="Jones M.A."/>
            <person name="Watson M."/>
            <person name="Barron A."/>
            <person name="Layton A."/>
            <person name="Pickard D."/>
            <person name="Kingsley R.A."/>
            <person name="Bignell A."/>
            <person name="Clark L."/>
            <person name="Harris B."/>
            <person name="Ormond D."/>
            <person name="Abdellah Z."/>
            <person name="Brooks K."/>
            <person name="Cherevach I."/>
            <person name="Chillingworth T."/>
            <person name="Woodward J."/>
            <person name="Norberczak H."/>
            <person name="Lord A."/>
            <person name="Arrowsmith C."/>
            <person name="Jagels K."/>
            <person name="Moule S."/>
            <person name="Mungall K."/>
            <person name="Saunders M."/>
            <person name="Whitehead S."/>
            <person name="Chabalgoity J.A."/>
            <person name="Maskell D."/>
            <person name="Humphreys T."/>
            <person name="Roberts M."/>
            <person name="Barrow P.A."/>
            <person name="Dougan G."/>
            <person name="Parkhill J."/>
        </authorList>
    </citation>
    <scope>NUCLEOTIDE SEQUENCE [LARGE SCALE GENOMIC DNA]</scope>
    <source>
        <strain>P125109</strain>
    </source>
</reference>
<name>UXUA_SALEP</name>
<proteinExistence type="inferred from homology"/>
<sequence>MKQTWRWYGPNDPVTLSDVRQAGATGVVTALHHIPNGEIWSIDEIQKRKAIVEEAGLEWSVVESVPIHEDIKTHTGQYDLWIKNYQQTLRNLAQCGIYTVCYNFMPVLDWTRTDLEYVLPDGSKALRFDQIEFAAFELHILKRPGAEADYTAEEIAQAERRFATMSEEDKARLTRNIIAGLPGAEEGYTLDQFRQHLATYKDIDKAKLREHFAYFLKAIIPVADEVGVRMAVHPDDPPRPILGLPRIVSTIEDMQWMVETVNSMANGFTMCTGSYGVRADNDLVDMIKQFGPRIYFTHLRSTLREENPKTFHEAAHLHGDVDMYEVVKAIVEEEHRRKAEGSDDLIPMRPDHGHQMLDDLKKKTNPGYSAIGRLKGLAEVRGVELAIQRAFFSK</sequence>
<organism>
    <name type="scientific">Salmonella enteritidis PT4 (strain P125109)</name>
    <dbReference type="NCBI Taxonomy" id="550537"/>
    <lineage>
        <taxon>Bacteria</taxon>
        <taxon>Pseudomonadati</taxon>
        <taxon>Pseudomonadota</taxon>
        <taxon>Gammaproteobacteria</taxon>
        <taxon>Enterobacterales</taxon>
        <taxon>Enterobacteriaceae</taxon>
        <taxon>Salmonella</taxon>
    </lineage>
</organism>
<feature type="chain" id="PRO_1000094219" description="Mannonate dehydratase">
    <location>
        <begin position="1"/>
        <end position="394"/>
    </location>
</feature>
<evidence type="ECO:0000255" key="1">
    <source>
        <dbReference type="HAMAP-Rule" id="MF_00106"/>
    </source>
</evidence>
<keyword id="KW-0408">Iron</keyword>
<keyword id="KW-0456">Lyase</keyword>
<keyword id="KW-0464">Manganese</keyword>
<comment type="function">
    <text evidence="1">Catalyzes the dehydration of D-mannonate.</text>
</comment>
<comment type="catalytic activity">
    <reaction evidence="1">
        <text>D-mannonate = 2-dehydro-3-deoxy-D-gluconate + H2O</text>
        <dbReference type="Rhea" id="RHEA:20097"/>
        <dbReference type="ChEBI" id="CHEBI:15377"/>
        <dbReference type="ChEBI" id="CHEBI:17767"/>
        <dbReference type="ChEBI" id="CHEBI:57990"/>
        <dbReference type="EC" id="4.2.1.8"/>
    </reaction>
</comment>
<comment type="cofactor">
    <cofactor evidence="1">
        <name>Fe(2+)</name>
        <dbReference type="ChEBI" id="CHEBI:29033"/>
    </cofactor>
    <cofactor evidence="1">
        <name>Mn(2+)</name>
        <dbReference type="ChEBI" id="CHEBI:29035"/>
    </cofactor>
</comment>
<comment type="pathway">
    <text evidence="1">Carbohydrate metabolism; pentose and glucuronate interconversion.</text>
</comment>
<comment type="similarity">
    <text evidence="1">Belongs to the mannonate dehydratase family.</text>
</comment>
<accession>B5QYB0</accession>